<reference key="1">
    <citation type="journal article" date="2011" name="J. Bacteriol.">
        <title>Comparative genomics of 28 Salmonella enterica isolates: evidence for CRISPR-mediated adaptive sublineage evolution.</title>
        <authorList>
            <person name="Fricke W.F."/>
            <person name="Mammel M.K."/>
            <person name="McDermott P.F."/>
            <person name="Tartera C."/>
            <person name="White D.G."/>
            <person name="Leclerc J.E."/>
            <person name="Ravel J."/>
            <person name="Cebula T.A."/>
        </authorList>
    </citation>
    <scope>NUCLEOTIDE SEQUENCE [LARGE SCALE GENOMIC DNA]</scope>
    <source>
        <strain>CT_02021853</strain>
    </source>
</reference>
<sequence length="177" mass="19412">MSEFVTVARPYAKAAFDFAVEHQSVERWQDMLAFAAEVTKNEQMAELLSGALAPETLAESFIAVCGEQLDENGQNLIRVMAENNRLNALPDVLEQFIHLRAASEATSEVEVTSATALSEEQLSKISAAMEKRLSRKVKLNCKIDKSVMAGVIIRAGDMVIDGSVRGRLERLADVLQS</sequence>
<proteinExistence type="inferred from homology"/>
<keyword id="KW-0066">ATP synthesis</keyword>
<keyword id="KW-0997">Cell inner membrane</keyword>
<keyword id="KW-1003">Cell membrane</keyword>
<keyword id="KW-0139">CF(1)</keyword>
<keyword id="KW-0375">Hydrogen ion transport</keyword>
<keyword id="KW-0406">Ion transport</keyword>
<keyword id="KW-0472">Membrane</keyword>
<keyword id="KW-0813">Transport</keyword>
<organism>
    <name type="scientific">Salmonella dublin (strain CT_02021853)</name>
    <dbReference type="NCBI Taxonomy" id="439851"/>
    <lineage>
        <taxon>Bacteria</taxon>
        <taxon>Pseudomonadati</taxon>
        <taxon>Pseudomonadota</taxon>
        <taxon>Gammaproteobacteria</taxon>
        <taxon>Enterobacterales</taxon>
        <taxon>Enterobacteriaceae</taxon>
        <taxon>Salmonella</taxon>
    </lineage>
</organism>
<gene>
    <name evidence="1" type="primary">atpH</name>
    <name type="ordered locus">SeD_A4258</name>
</gene>
<evidence type="ECO:0000255" key="1">
    <source>
        <dbReference type="HAMAP-Rule" id="MF_01416"/>
    </source>
</evidence>
<protein>
    <recommendedName>
        <fullName evidence="1">ATP synthase subunit delta</fullName>
    </recommendedName>
    <alternativeName>
        <fullName evidence="1">ATP synthase F(1) sector subunit delta</fullName>
    </alternativeName>
    <alternativeName>
        <fullName evidence="1">F-type ATPase subunit delta</fullName>
        <shortName evidence="1">F-ATPase subunit delta</shortName>
    </alternativeName>
</protein>
<name>ATPD_SALDC</name>
<accession>B5FN36</accession>
<dbReference type="EMBL" id="CP001144">
    <property type="protein sequence ID" value="ACH76390.1"/>
    <property type="molecule type" value="Genomic_DNA"/>
</dbReference>
<dbReference type="RefSeq" id="WP_001288957.1">
    <property type="nucleotide sequence ID" value="NC_011205.1"/>
</dbReference>
<dbReference type="SMR" id="B5FN36"/>
<dbReference type="KEGG" id="sed:SeD_A4258"/>
<dbReference type="HOGENOM" id="CLU_085114_3_0_6"/>
<dbReference type="Proteomes" id="UP000008322">
    <property type="component" value="Chromosome"/>
</dbReference>
<dbReference type="GO" id="GO:0005886">
    <property type="term" value="C:plasma membrane"/>
    <property type="evidence" value="ECO:0007669"/>
    <property type="project" value="UniProtKB-SubCell"/>
</dbReference>
<dbReference type="GO" id="GO:0045259">
    <property type="term" value="C:proton-transporting ATP synthase complex"/>
    <property type="evidence" value="ECO:0007669"/>
    <property type="project" value="UniProtKB-KW"/>
</dbReference>
<dbReference type="GO" id="GO:0046933">
    <property type="term" value="F:proton-transporting ATP synthase activity, rotational mechanism"/>
    <property type="evidence" value="ECO:0007669"/>
    <property type="project" value="UniProtKB-UniRule"/>
</dbReference>
<dbReference type="FunFam" id="1.10.520.20:FF:000001">
    <property type="entry name" value="ATP synthase subunit delta"/>
    <property type="match status" value="1"/>
</dbReference>
<dbReference type="Gene3D" id="1.10.520.20">
    <property type="entry name" value="N-terminal domain of the delta subunit of the F1F0-ATP synthase"/>
    <property type="match status" value="1"/>
</dbReference>
<dbReference type="HAMAP" id="MF_01416">
    <property type="entry name" value="ATP_synth_delta_bact"/>
    <property type="match status" value="1"/>
</dbReference>
<dbReference type="InterPro" id="IPR026015">
    <property type="entry name" value="ATP_synth_OSCP/delta_N_sf"/>
</dbReference>
<dbReference type="InterPro" id="IPR020781">
    <property type="entry name" value="ATPase_OSCP/d_CS"/>
</dbReference>
<dbReference type="InterPro" id="IPR000711">
    <property type="entry name" value="ATPase_OSCP/dsu"/>
</dbReference>
<dbReference type="NCBIfam" id="TIGR01145">
    <property type="entry name" value="ATP_synt_delta"/>
    <property type="match status" value="1"/>
</dbReference>
<dbReference type="NCBIfam" id="NF004402">
    <property type="entry name" value="PRK05758.2-2"/>
    <property type="match status" value="1"/>
</dbReference>
<dbReference type="NCBIfam" id="NF004404">
    <property type="entry name" value="PRK05758.2-5"/>
    <property type="match status" value="1"/>
</dbReference>
<dbReference type="PANTHER" id="PTHR11910">
    <property type="entry name" value="ATP SYNTHASE DELTA CHAIN"/>
    <property type="match status" value="1"/>
</dbReference>
<dbReference type="Pfam" id="PF00213">
    <property type="entry name" value="OSCP"/>
    <property type="match status" value="1"/>
</dbReference>
<dbReference type="PRINTS" id="PR00125">
    <property type="entry name" value="ATPASEDELTA"/>
</dbReference>
<dbReference type="SUPFAM" id="SSF47928">
    <property type="entry name" value="N-terminal domain of the delta subunit of the F1F0-ATP synthase"/>
    <property type="match status" value="1"/>
</dbReference>
<dbReference type="PROSITE" id="PS00389">
    <property type="entry name" value="ATPASE_DELTA"/>
    <property type="match status" value="1"/>
</dbReference>
<feature type="chain" id="PRO_0000371114" description="ATP synthase subunit delta">
    <location>
        <begin position="1"/>
        <end position="177"/>
    </location>
</feature>
<comment type="function">
    <text evidence="1">F(1)F(0) ATP synthase produces ATP from ADP in the presence of a proton or sodium gradient. F-type ATPases consist of two structural domains, F(1) containing the extramembraneous catalytic core and F(0) containing the membrane proton channel, linked together by a central stalk and a peripheral stalk. During catalysis, ATP synthesis in the catalytic domain of F(1) is coupled via a rotary mechanism of the central stalk subunits to proton translocation.</text>
</comment>
<comment type="function">
    <text evidence="1">This protein is part of the stalk that links CF(0) to CF(1). It either transmits conformational changes from CF(0) to CF(1) or is implicated in proton conduction.</text>
</comment>
<comment type="subunit">
    <text evidence="1">F-type ATPases have 2 components, F(1) - the catalytic core - and F(0) - the membrane proton channel. F(1) has five subunits: alpha(3), beta(3), gamma(1), delta(1), epsilon(1). F(0) has three main subunits: a(1), b(2) and c(10-14). The alpha and beta chains form an alternating ring which encloses part of the gamma chain. F(1) is attached to F(0) by a central stalk formed by the gamma and epsilon chains, while a peripheral stalk is formed by the delta and b chains.</text>
</comment>
<comment type="subcellular location">
    <subcellularLocation>
        <location evidence="1">Cell inner membrane</location>
        <topology evidence="1">Peripheral membrane protein</topology>
    </subcellularLocation>
</comment>
<comment type="similarity">
    <text evidence="1">Belongs to the ATPase delta chain family.</text>
</comment>